<keyword id="KW-1185">Reference proteome</keyword>
<keyword id="KW-0687">Ribonucleoprotein</keyword>
<keyword id="KW-0689">Ribosomal protein</keyword>
<keyword id="KW-0694">RNA-binding</keyword>
<keyword id="KW-0699">rRNA-binding</keyword>
<dbReference type="EMBL" id="AE017143">
    <property type="protein sequence ID" value="AAP95922.1"/>
    <property type="molecule type" value="Genomic_DNA"/>
</dbReference>
<dbReference type="RefSeq" id="WP_010944971.1">
    <property type="nucleotide sequence ID" value="NC_002940.2"/>
</dbReference>
<dbReference type="SMR" id="Q7VMD5"/>
<dbReference type="STRING" id="233412.HD_1048"/>
<dbReference type="GeneID" id="60732916"/>
<dbReference type="KEGG" id="hdu:HD_1048"/>
<dbReference type="eggNOG" id="COG0359">
    <property type="taxonomic scope" value="Bacteria"/>
</dbReference>
<dbReference type="HOGENOM" id="CLU_078938_4_1_6"/>
<dbReference type="OrthoDB" id="9788336at2"/>
<dbReference type="Proteomes" id="UP000001022">
    <property type="component" value="Chromosome"/>
</dbReference>
<dbReference type="GO" id="GO:1990904">
    <property type="term" value="C:ribonucleoprotein complex"/>
    <property type="evidence" value="ECO:0007669"/>
    <property type="project" value="UniProtKB-KW"/>
</dbReference>
<dbReference type="GO" id="GO:0005840">
    <property type="term" value="C:ribosome"/>
    <property type="evidence" value="ECO:0007669"/>
    <property type="project" value="UniProtKB-KW"/>
</dbReference>
<dbReference type="GO" id="GO:0019843">
    <property type="term" value="F:rRNA binding"/>
    <property type="evidence" value="ECO:0007669"/>
    <property type="project" value="UniProtKB-UniRule"/>
</dbReference>
<dbReference type="GO" id="GO:0003735">
    <property type="term" value="F:structural constituent of ribosome"/>
    <property type="evidence" value="ECO:0007669"/>
    <property type="project" value="InterPro"/>
</dbReference>
<dbReference type="GO" id="GO:0006412">
    <property type="term" value="P:translation"/>
    <property type="evidence" value="ECO:0007669"/>
    <property type="project" value="UniProtKB-UniRule"/>
</dbReference>
<dbReference type="FunFam" id="3.40.5.10:FF:000001">
    <property type="entry name" value="50S ribosomal protein L9"/>
    <property type="match status" value="1"/>
</dbReference>
<dbReference type="Gene3D" id="3.10.430.100">
    <property type="entry name" value="Ribosomal protein L9, C-terminal domain"/>
    <property type="match status" value="1"/>
</dbReference>
<dbReference type="Gene3D" id="3.40.5.10">
    <property type="entry name" value="Ribosomal protein L9, N-terminal domain"/>
    <property type="match status" value="1"/>
</dbReference>
<dbReference type="HAMAP" id="MF_00503">
    <property type="entry name" value="Ribosomal_bL9"/>
    <property type="match status" value="1"/>
</dbReference>
<dbReference type="InterPro" id="IPR000244">
    <property type="entry name" value="Ribosomal_bL9"/>
</dbReference>
<dbReference type="InterPro" id="IPR009027">
    <property type="entry name" value="Ribosomal_bL9/RNase_H1_N"/>
</dbReference>
<dbReference type="InterPro" id="IPR020594">
    <property type="entry name" value="Ribosomal_bL9_bac/chp"/>
</dbReference>
<dbReference type="InterPro" id="IPR020069">
    <property type="entry name" value="Ribosomal_bL9_C"/>
</dbReference>
<dbReference type="InterPro" id="IPR036791">
    <property type="entry name" value="Ribosomal_bL9_C_sf"/>
</dbReference>
<dbReference type="InterPro" id="IPR020070">
    <property type="entry name" value="Ribosomal_bL9_N"/>
</dbReference>
<dbReference type="InterPro" id="IPR036935">
    <property type="entry name" value="Ribosomal_bL9_N_sf"/>
</dbReference>
<dbReference type="NCBIfam" id="TIGR00158">
    <property type="entry name" value="L9"/>
    <property type="match status" value="1"/>
</dbReference>
<dbReference type="PANTHER" id="PTHR21368">
    <property type="entry name" value="50S RIBOSOMAL PROTEIN L9"/>
    <property type="match status" value="1"/>
</dbReference>
<dbReference type="Pfam" id="PF03948">
    <property type="entry name" value="Ribosomal_L9_C"/>
    <property type="match status" value="1"/>
</dbReference>
<dbReference type="Pfam" id="PF01281">
    <property type="entry name" value="Ribosomal_L9_N"/>
    <property type="match status" value="1"/>
</dbReference>
<dbReference type="SUPFAM" id="SSF55658">
    <property type="entry name" value="L9 N-domain-like"/>
    <property type="match status" value="1"/>
</dbReference>
<dbReference type="SUPFAM" id="SSF55653">
    <property type="entry name" value="Ribosomal protein L9 C-domain"/>
    <property type="match status" value="1"/>
</dbReference>
<dbReference type="PROSITE" id="PS00651">
    <property type="entry name" value="RIBOSOMAL_L9"/>
    <property type="match status" value="1"/>
</dbReference>
<accession>Q7VMD5</accession>
<evidence type="ECO:0000255" key="1">
    <source>
        <dbReference type="HAMAP-Rule" id="MF_00503"/>
    </source>
</evidence>
<evidence type="ECO:0000305" key="2"/>
<proteinExistence type="inferred from homology"/>
<protein>
    <recommendedName>
        <fullName evidence="1">Large ribosomal subunit protein bL9</fullName>
    </recommendedName>
    <alternativeName>
        <fullName evidence="2">50S ribosomal protein L9</fullName>
    </alternativeName>
</protein>
<sequence length="149" mass="15364">MQVILLDKVAHLGTVGDQVTVKSGYARNFLIPQGKAVMATAANIAHFEARRAELEAKAAAVLSAAKERAAKIAAIGAVSVSATAGDDGRLFGSISAKDIADALVAAGIEVTKSEVRLGEGPLRTTGEHEVKVHLHAEVNAMVTVNVVAE</sequence>
<gene>
    <name evidence="1" type="primary">rplI</name>
    <name type="ordered locus">HD_1048</name>
</gene>
<reference key="1">
    <citation type="submission" date="2003-06" db="EMBL/GenBank/DDBJ databases">
        <title>The complete genome sequence of Haemophilus ducreyi.</title>
        <authorList>
            <person name="Munson R.S. Jr."/>
            <person name="Ray W.C."/>
            <person name="Mahairas G."/>
            <person name="Sabo P."/>
            <person name="Mungur R."/>
            <person name="Johnson L."/>
            <person name="Nguyen D."/>
            <person name="Wang J."/>
            <person name="Forst C."/>
            <person name="Hood L."/>
        </authorList>
    </citation>
    <scope>NUCLEOTIDE SEQUENCE [LARGE SCALE GENOMIC DNA]</scope>
    <source>
        <strain>35000HP / ATCC 700724</strain>
    </source>
</reference>
<organism>
    <name type="scientific">Haemophilus ducreyi (strain 35000HP / ATCC 700724)</name>
    <dbReference type="NCBI Taxonomy" id="233412"/>
    <lineage>
        <taxon>Bacteria</taxon>
        <taxon>Pseudomonadati</taxon>
        <taxon>Pseudomonadota</taxon>
        <taxon>Gammaproteobacteria</taxon>
        <taxon>Pasteurellales</taxon>
        <taxon>Pasteurellaceae</taxon>
        <taxon>Haemophilus</taxon>
    </lineage>
</organism>
<name>RL9_HAEDU</name>
<comment type="function">
    <text evidence="1">Binds to the 23S rRNA.</text>
</comment>
<comment type="similarity">
    <text evidence="1">Belongs to the bacterial ribosomal protein bL9 family.</text>
</comment>
<feature type="chain" id="PRO_0000176640" description="Large ribosomal subunit protein bL9">
    <location>
        <begin position="1"/>
        <end position="149"/>
    </location>
</feature>